<reference evidence="9 10" key="1">
    <citation type="journal article" date="2012" name="Hum. Mol. Genet.">
        <title>Defect in the gene encoding the EAR/EPTP domain-containing protein TSPEAR causes DFNB98 profound deafness.</title>
        <authorList>
            <person name="Delmaghani S."/>
            <person name="Aghaie A."/>
            <person name="Michalski N."/>
            <person name="Bonnet C."/>
            <person name="Weil D."/>
            <person name="Petit C."/>
        </authorList>
    </citation>
    <scope>NUCLEOTIDE SEQUENCE [MRNA] (ISOFORM 1)</scope>
    <scope>SUBCELLULAR LOCATION</scope>
    <scope>TISSUE SPECIFICITY</scope>
    <source>
        <strain evidence="10">C57BL/6J</strain>
        <tissue evidence="10">Cochlea</tissue>
    </source>
</reference>
<reference evidence="9 11" key="2">
    <citation type="journal article" date="2005" name="Science">
        <title>The transcriptional landscape of the mammalian genome.</title>
        <authorList>
            <person name="Carninci P."/>
            <person name="Kasukawa T."/>
            <person name="Katayama S."/>
            <person name="Gough J."/>
            <person name="Frith M.C."/>
            <person name="Maeda N."/>
            <person name="Oyama R."/>
            <person name="Ravasi T."/>
            <person name="Lenhard B."/>
            <person name="Wells C."/>
            <person name="Kodzius R."/>
            <person name="Shimokawa K."/>
            <person name="Bajic V.B."/>
            <person name="Brenner S.E."/>
            <person name="Batalov S."/>
            <person name="Forrest A.R."/>
            <person name="Zavolan M."/>
            <person name="Davis M.J."/>
            <person name="Wilming L.G."/>
            <person name="Aidinis V."/>
            <person name="Allen J.E."/>
            <person name="Ambesi-Impiombato A."/>
            <person name="Apweiler R."/>
            <person name="Aturaliya R.N."/>
            <person name="Bailey T.L."/>
            <person name="Bansal M."/>
            <person name="Baxter L."/>
            <person name="Beisel K.W."/>
            <person name="Bersano T."/>
            <person name="Bono H."/>
            <person name="Chalk A.M."/>
            <person name="Chiu K.P."/>
            <person name="Choudhary V."/>
            <person name="Christoffels A."/>
            <person name="Clutterbuck D.R."/>
            <person name="Crowe M.L."/>
            <person name="Dalla E."/>
            <person name="Dalrymple B.P."/>
            <person name="de Bono B."/>
            <person name="Della Gatta G."/>
            <person name="di Bernardo D."/>
            <person name="Down T."/>
            <person name="Engstrom P."/>
            <person name="Fagiolini M."/>
            <person name="Faulkner G."/>
            <person name="Fletcher C.F."/>
            <person name="Fukushima T."/>
            <person name="Furuno M."/>
            <person name="Futaki S."/>
            <person name="Gariboldi M."/>
            <person name="Georgii-Hemming P."/>
            <person name="Gingeras T.R."/>
            <person name="Gojobori T."/>
            <person name="Green R.E."/>
            <person name="Gustincich S."/>
            <person name="Harbers M."/>
            <person name="Hayashi Y."/>
            <person name="Hensch T.K."/>
            <person name="Hirokawa N."/>
            <person name="Hill D."/>
            <person name="Huminiecki L."/>
            <person name="Iacono M."/>
            <person name="Ikeo K."/>
            <person name="Iwama A."/>
            <person name="Ishikawa T."/>
            <person name="Jakt M."/>
            <person name="Kanapin A."/>
            <person name="Katoh M."/>
            <person name="Kawasawa Y."/>
            <person name="Kelso J."/>
            <person name="Kitamura H."/>
            <person name="Kitano H."/>
            <person name="Kollias G."/>
            <person name="Krishnan S.P."/>
            <person name="Kruger A."/>
            <person name="Kummerfeld S.K."/>
            <person name="Kurochkin I.V."/>
            <person name="Lareau L.F."/>
            <person name="Lazarevic D."/>
            <person name="Lipovich L."/>
            <person name="Liu J."/>
            <person name="Liuni S."/>
            <person name="McWilliam S."/>
            <person name="Madan Babu M."/>
            <person name="Madera M."/>
            <person name="Marchionni L."/>
            <person name="Matsuda H."/>
            <person name="Matsuzawa S."/>
            <person name="Miki H."/>
            <person name="Mignone F."/>
            <person name="Miyake S."/>
            <person name="Morris K."/>
            <person name="Mottagui-Tabar S."/>
            <person name="Mulder N."/>
            <person name="Nakano N."/>
            <person name="Nakauchi H."/>
            <person name="Ng P."/>
            <person name="Nilsson R."/>
            <person name="Nishiguchi S."/>
            <person name="Nishikawa S."/>
            <person name="Nori F."/>
            <person name="Ohara O."/>
            <person name="Okazaki Y."/>
            <person name="Orlando V."/>
            <person name="Pang K.C."/>
            <person name="Pavan W.J."/>
            <person name="Pavesi G."/>
            <person name="Pesole G."/>
            <person name="Petrovsky N."/>
            <person name="Piazza S."/>
            <person name="Reed J."/>
            <person name="Reid J.F."/>
            <person name="Ring B.Z."/>
            <person name="Ringwald M."/>
            <person name="Rost B."/>
            <person name="Ruan Y."/>
            <person name="Salzberg S.L."/>
            <person name="Sandelin A."/>
            <person name="Schneider C."/>
            <person name="Schoenbach C."/>
            <person name="Sekiguchi K."/>
            <person name="Semple C.A."/>
            <person name="Seno S."/>
            <person name="Sessa L."/>
            <person name="Sheng Y."/>
            <person name="Shibata Y."/>
            <person name="Shimada H."/>
            <person name="Shimada K."/>
            <person name="Silva D."/>
            <person name="Sinclair B."/>
            <person name="Sperling S."/>
            <person name="Stupka E."/>
            <person name="Sugiura K."/>
            <person name="Sultana R."/>
            <person name="Takenaka Y."/>
            <person name="Taki K."/>
            <person name="Tammoja K."/>
            <person name="Tan S.L."/>
            <person name="Tang S."/>
            <person name="Taylor M.S."/>
            <person name="Tegner J."/>
            <person name="Teichmann S.A."/>
            <person name="Ueda H.R."/>
            <person name="van Nimwegen E."/>
            <person name="Verardo R."/>
            <person name="Wei C.L."/>
            <person name="Yagi K."/>
            <person name="Yamanishi H."/>
            <person name="Zabarovsky E."/>
            <person name="Zhu S."/>
            <person name="Zimmer A."/>
            <person name="Hide W."/>
            <person name="Bult C."/>
            <person name="Grimmond S.M."/>
            <person name="Teasdale R.D."/>
            <person name="Liu E.T."/>
            <person name="Brusic V."/>
            <person name="Quackenbush J."/>
            <person name="Wahlestedt C."/>
            <person name="Mattick J.S."/>
            <person name="Hume D.A."/>
            <person name="Kai C."/>
            <person name="Sasaki D."/>
            <person name="Tomaru Y."/>
            <person name="Fukuda S."/>
            <person name="Kanamori-Katayama M."/>
            <person name="Suzuki M."/>
            <person name="Aoki J."/>
            <person name="Arakawa T."/>
            <person name="Iida J."/>
            <person name="Imamura K."/>
            <person name="Itoh M."/>
            <person name="Kato T."/>
            <person name="Kawaji H."/>
            <person name="Kawagashira N."/>
            <person name="Kawashima T."/>
            <person name="Kojima M."/>
            <person name="Kondo S."/>
            <person name="Konno H."/>
            <person name="Nakano K."/>
            <person name="Ninomiya N."/>
            <person name="Nishio T."/>
            <person name="Okada M."/>
            <person name="Plessy C."/>
            <person name="Shibata K."/>
            <person name="Shiraki T."/>
            <person name="Suzuki S."/>
            <person name="Tagami M."/>
            <person name="Waki K."/>
            <person name="Watahiki A."/>
            <person name="Okamura-Oho Y."/>
            <person name="Suzuki H."/>
            <person name="Kawai J."/>
            <person name="Hayashizaki Y."/>
        </authorList>
    </citation>
    <scope>NUCLEOTIDE SEQUENCE [LARGE SCALE MRNA] (ISOFORM 3)</scope>
    <source>
        <strain evidence="11">C57BL/6J</strain>
        <tissue evidence="5">Embryonic stem cell</tissue>
    </source>
</reference>
<reference key="3">
    <citation type="journal article" date="2009" name="PLoS Biol.">
        <title>Lineage-specific biology revealed by a finished genome assembly of the mouse.</title>
        <authorList>
            <person name="Church D.M."/>
            <person name="Goodstadt L."/>
            <person name="Hillier L.W."/>
            <person name="Zody M.C."/>
            <person name="Goldstein S."/>
            <person name="She X."/>
            <person name="Bult C.J."/>
            <person name="Agarwala R."/>
            <person name="Cherry J.L."/>
            <person name="DiCuccio M."/>
            <person name="Hlavina W."/>
            <person name="Kapustin Y."/>
            <person name="Meric P."/>
            <person name="Maglott D."/>
            <person name="Birtle Z."/>
            <person name="Marques A.C."/>
            <person name="Graves T."/>
            <person name="Zhou S."/>
            <person name="Teague B."/>
            <person name="Potamousis K."/>
            <person name="Churas C."/>
            <person name="Place M."/>
            <person name="Herschleb J."/>
            <person name="Runnheim R."/>
            <person name="Forrest D."/>
            <person name="Amos-Landgraf J."/>
            <person name="Schwartz D.C."/>
            <person name="Cheng Z."/>
            <person name="Lindblad-Toh K."/>
            <person name="Eichler E.E."/>
            <person name="Ponting C.P."/>
        </authorList>
    </citation>
    <scope>NUCLEOTIDE SEQUENCE [LARGE SCALE GENOMIC DNA]</scope>
    <source>
        <strain>C57BL/6J</strain>
    </source>
</reference>
<reference evidence="9 12" key="4">
    <citation type="journal article" date="2002" name="Trends Biochem. Sci.">
        <title>The novel EPTP repeat defines a superfamily of proteins implicated in epileptic disorders.</title>
        <authorList>
            <person name="Staub E."/>
            <person name="Perez-Tur J."/>
            <person name="Siebert R."/>
            <person name="Nobile C."/>
            <person name="Moschonas N.K."/>
            <person name="Deloukas P."/>
            <person name="Hinzmann B."/>
        </authorList>
    </citation>
    <scope>NUCLEOTIDE SEQUENCE [MRNA] OF 30-670 (ISOFORM 2)</scope>
    <source>
        <strain evidence="12">C57BL/6J</strain>
    </source>
</reference>
<dbReference type="EMBL" id="JQ815565">
    <property type="protein sequence ID" value="AFH76477.1"/>
    <property type="molecule type" value="mRNA"/>
</dbReference>
<dbReference type="EMBL" id="AK082868">
    <property type="protein sequence ID" value="BAC38661.1"/>
    <property type="molecule type" value="mRNA"/>
</dbReference>
<dbReference type="EMBL" id="AC153874">
    <property type="status" value="NOT_ANNOTATED_CDS"/>
    <property type="molecule type" value="Genomic_DNA"/>
</dbReference>
<dbReference type="EMBL" id="AJ487520">
    <property type="protein sequence ID" value="CAD31788.1"/>
    <property type="status" value="ALT_INIT"/>
    <property type="molecule type" value="mRNA"/>
</dbReference>
<dbReference type="CCDS" id="CCDS83718.1">
    <molecule id="J3S6Y1-1"/>
</dbReference>
<dbReference type="RefSeq" id="NP_001274003.1">
    <molecule id="J3S6Y1-1"/>
    <property type="nucleotide sequence ID" value="NM_001287074.1"/>
</dbReference>
<dbReference type="SMR" id="J3S6Y1"/>
<dbReference type="FunCoup" id="J3S6Y1">
    <property type="interactions" value="42"/>
</dbReference>
<dbReference type="STRING" id="10090.ENSMUSP00000090020"/>
<dbReference type="GlyCosmos" id="J3S6Y1">
    <property type="glycosylation" value="1 site, No reported glycans"/>
</dbReference>
<dbReference type="GlyGen" id="J3S6Y1">
    <property type="glycosylation" value="1 site"/>
</dbReference>
<dbReference type="PhosphoSitePlus" id="J3S6Y1"/>
<dbReference type="PaxDb" id="10090-ENSMUSP00000090022"/>
<dbReference type="Antibodypedia" id="53321">
    <property type="antibodies" value="91 antibodies from 14 providers"/>
</dbReference>
<dbReference type="DNASU" id="252974"/>
<dbReference type="Ensembl" id="ENSMUST00000092366.4">
    <molecule id="J3S6Y1-1"/>
    <property type="protein sequence ID" value="ENSMUSP00000090020.4"/>
    <property type="gene ID" value="ENSMUSG00000069581.13"/>
</dbReference>
<dbReference type="GeneID" id="252974"/>
<dbReference type="KEGG" id="mmu:252974"/>
<dbReference type="UCSC" id="uc007fwg.2">
    <molecule id="J3S6Y1-1"/>
    <property type="organism name" value="mouse"/>
</dbReference>
<dbReference type="AGR" id="MGI:2671932"/>
<dbReference type="CTD" id="54084"/>
<dbReference type="MGI" id="MGI:2671932">
    <property type="gene designation" value="Tspear"/>
</dbReference>
<dbReference type="VEuPathDB" id="HostDB:ENSMUSG00000069581"/>
<dbReference type="eggNOG" id="KOG3544">
    <property type="taxonomic scope" value="Eukaryota"/>
</dbReference>
<dbReference type="GeneTree" id="ENSGT00510000047718"/>
<dbReference type="HOGENOM" id="CLU_028578_0_0_1"/>
<dbReference type="InParanoid" id="J3S6Y1"/>
<dbReference type="OMA" id="THGARDW"/>
<dbReference type="OrthoDB" id="408373at2759"/>
<dbReference type="BioGRID-ORCS" id="252974">
    <property type="hits" value="3 hits in 56 CRISPR screens"/>
</dbReference>
<dbReference type="ChiTaRS" id="Tspear">
    <property type="organism name" value="mouse"/>
</dbReference>
<dbReference type="PRO" id="PR:J3S6Y1"/>
<dbReference type="Proteomes" id="UP000000589">
    <property type="component" value="Chromosome 10"/>
</dbReference>
<dbReference type="RNAct" id="J3S6Y1">
    <property type="molecule type" value="protein"/>
</dbReference>
<dbReference type="Bgee" id="ENSMUSG00000069581">
    <property type="expression patterns" value="Expressed in mesonephros and 47 other cell types or tissues"/>
</dbReference>
<dbReference type="GO" id="GO:0009986">
    <property type="term" value="C:cell surface"/>
    <property type="evidence" value="ECO:0000314"/>
    <property type="project" value="UniProtKB"/>
</dbReference>
<dbReference type="GO" id="GO:0060170">
    <property type="term" value="C:ciliary membrane"/>
    <property type="evidence" value="ECO:0000314"/>
    <property type="project" value="MGI"/>
</dbReference>
<dbReference type="GO" id="GO:0005576">
    <property type="term" value="C:extracellular region"/>
    <property type="evidence" value="ECO:0007669"/>
    <property type="project" value="UniProtKB-SubCell"/>
</dbReference>
<dbReference type="GO" id="GO:0032420">
    <property type="term" value="C:stereocilium"/>
    <property type="evidence" value="ECO:0000314"/>
    <property type="project" value="UniProtKB"/>
</dbReference>
<dbReference type="GO" id="GO:0022405">
    <property type="term" value="P:hair cycle process"/>
    <property type="evidence" value="ECO:0000315"/>
    <property type="project" value="MGI"/>
</dbReference>
<dbReference type="GO" id="GO:0007219">
    <property type="term" value="P:Notch signaling pathway"/>
    <property type="evidence" value="ECO:0000315"/>
    <property type="project" value="MGI"/>
</dbReference>
<dbReference type="GO" id="GO:0008593">
    <property type="term" value="P:regulation of Notch signaling pathway"/>
    <property type="evidence" value="ECO:0000250"/>
    <property type="project" value="UniProtKB"/>
</dbReference>
<dbReference type="GO" id="GO:0007605">
    <property type="term" value="P:sensory perception of sound"/>
    <property type="evidence" value="ECO:0000250"/>
    <property type="project" value="UniProtKB"/>
</dbReference>
<dbReference type="GO" id="GO:0034505">
    <property type="term" value="P:tooth mineralization"/>
    <property type="evidence" value="ECO:0000250"/>
    <property type="project" value="UniProtKB"/>
</dbReference>
<dbReference type="Gene3D" id="2.60.120.200">
    <property type="match status" value="1"/>
</dbReference>
<dbReference type="InterPro" id="IPR013320">
    <property type="entry name" value="ConA-like_dom_sf"/>
</dbReference>
<dbReference type="InterPro" id="IPR009039">
    <property type="entry name" value="EAR"/>
</dbReference>
<dbReference type="InterPro" id="IPR005492">
    <property type="entry name" value="EPTP"/>
</dbReference>
<dbReference type="InterPro" id="IPR048287">
    <property type="entry name" value="TSPN-like_N"/>
</dbReference>
<dbReference type="PANTHER" id="PTHR15261">
    <property type="entry name" value="THROMBOSPONDIN-TYPE LAMININ G DOMAIN AND EAR REPEAT-CONTAINING"/>
    <property type="match status" value="1"/>
</dbReference>
<dbReference type="PANTHER" id="PTHR15261:SF4">
    <property type="entry name" value="THROMBOSPONDIN-TYPE LAMININ G DOMAIN AND EAR REPEAT-CONTAINING PROTEIN"/>
    <property type="match status" value="1"/>
</dbReference>
<dbReference type="Pfam" id="PF03736">
    <property type="entry name" value="EPTP"/>
    <property type="match status" value="5"/>
</dbReference>
<dbReference type="SMART" id="SM00210">
    <property type="entry name" value="TSPN"/>
    <property type="match status" value="1"/>
</dbReference>
<dbReference type="SUPFAM" id="SSF49899">
    <property type="entry name" value="Concanavalin A-like lectins/glucanases"/>
    <property type="match status" value="1"/>
</dbReference>
<dbReference type="PROSITE" id="PS50912">
    <property type="entry name" value="EAR"/>
    <property type="match status" value="7"/>
</dbReference>
<organism>
    <name type="scientific">Mus musculus</name>
    <name type="common">Mouse</name>
    <dbReference type="NCBI Taxonomy" id="10090"/>
    <lineage>
        <taxon>Eukaryota</taxon>
        <taxon>Metazoa</taxon>
        <taxon>Chordata</taxon>
        <taxon>Craniata</taxon>
        <taxon>Vertebrata</taxon>
        <taxon>Euteleostomi</taxon>
        <taxon>Mammalia</taxon>
        <taxon>Eutheria</taxon>
        <taxon>Euarchontoglires</taxon>
        <taxon>Glires</taxon>
        <taxon>Rodentia</taxon>
        <taxon>Myomorpha</taxon>
        <taxon>Muroidea</taxon>
        <taxon>Muridae</taxon>
        <taxon>Murinae</taxon>
        <taxon>Mus</taxon>
        <taxon>Mus</taxon>
    </lineage>
</organism>
<gene>
    <name evidence="10" type="primary">Tspear</name>
    <name evidence="12" type="synonym">Tnep1</name>
</gene>
<protein>
    <recommendedName>
        <fullName evidence="10">Thrombospondin-type laminin G domain and EAR repeat-containing protein</fullName>
        <shortName evidence="1">TSP-EAR</shortName>
    </recommendedName>
</protein>
<accession>J3S6Y1</accession>
<accession>Q8BUQ8</accession>
<accession>Q8K4Y9</accession>
<comment type="function">
    <text evidence="1">Plays a critical role in tooth and hair follicle morphogenesis through regulation of the Notch signaling pathway. May play a role in development or function of the auditory system.</text>
</comment>
<comment type="subcellular location">
    <subcellularLocation>
        <location evidence="6">Secreted</location>
    </subcellularLocation>
    <subcellularLocation>
        <location evidence="6">Cell surface</location>
    </subcellularLocation>
    <subcellularLocation>
        <location evidence="6">Cell projection</location>
        <location evidence="6">Stereocilium</location>
    </subcellularLocation>
    <text evidence="6">Secreted protein which may bind to the cell surface via a membrane receptor.</text>
</comment>
<comment type="alternative products">
    <event type="alternative splicing"/>
    <isoform>
        <id>J3S6Y1-1</id>
        <name evidence="6">1</name>
        <sequence type="displayed"/>
    </isoform>
    <isoform>
        <id>J3S6Y1-2</id>
        <name evidence="4">2</name>
        <sequence type="described" ref="VSP_044543 VSP_044544"/>
    </isoform>
    <isoform>
        <id>J3S6Y1-3</id>
        <name evidence="5">3</name>
        <sequence type="described" ref="VSP_044542"/>
    </isoform>
</comment>
<comment type="tissue specificity">
    <text evidence="6">In the organ of Corti, expression at postnatal day 1 (P1) is restricted to the basal region of the stereocilia of inner and outer hair cells (at protein level). Expressed in the organ of Corti at P1 and P7, in cochlear ganglion, stria vascularis and vestibular ends at P7, and in inferior colliculus, remaining brainstem, cerebellum, brain hemispheres and retina at P1, P7 and in the adult. Also detected in adult liver, lung, kidney, intestine and testis but not in heart or skeletal muscle.</text>
</comment>
<comment type="sequence caution" evidence="9">
    <conflict type="erroneous initiation">
        <sequence resource="EMBL-CDS" id="CAD31788"/>
    </conflict>
    <text>Truncated N-terminus.</text>
</comment>
<evidence type="ECO:0000250" key="1">
    <source>
        <dbReference type="UniProtKB" id="Q8WU66"/>
    </source>
</evidence>
<evidence type="ECO:0000255" key="2"/>
<evidence type="ECO:0000255" key="3">
    <source>
        <dbReference type="PROSITE-ProRule" id="PRU00075"/>
    </source>
</evidence>
<evidence type="ECO:0000269" key="4">
    <source>
    </source>
</evidence>
<evidence type="ECO:0000269" key="5">
    <source>
    </source>
</evidence>
<evidence type="ECO:0000269" key="6">
    <source>
    </source>
</evidence>
<evidence type="ECO:0000303" key="7">
    <source>
    </source>
</evidence>
<evidence type="ECO:0000303" key="8">
    <source>
    </source>
</evidence>
<evidence type="ECO:0000305" key="9"/>
<evidence type="ECO:0000312" key="10">
    <source>
        <dbReference type="EMBL" id="AFH76477.1"/>
    </source>
</evidence>
<evidence type="ECO:0000312" key="11">
    <source>
        <dbReference type="EMBL" id="BAC38661.1"/>
    </source>
</evidence>
<evidence type="ECO:0000312" key="12">
    <source>
        <dbReference type="EMBL" id="CAD31788.1"/>
    </source>
</evidence>
<name>TSEAR_MOUSE</name>
<feature type="signal peptide" evidence="2">
    <location>
        <begin position="1"/>
        <end position="20"/>
    </location>
</feature>
<feature type="chain" id="PRO_0000420603" description="Thrombospondin-type laminin G domain and EAR repeat-containing protein" evidence="2">
    <location>
        <begin position="21"/>
        <end position="670"/>
    </location>
</feature>
<feature type="domain" description="Laminin G-like" evidence="2">
    <location>
        <begin position="59"/>
        <end position="278"/>
    </location>
</feature>
<feature type="repeat" description="EAR 1" evidence="3">
    <location>
        <begin position="314"/>
        <end position="359"/>
    </location>
</feature>
<feature type="repeat" description="EAR 2" evidence="3">
    <location>
        <begin position="361"/>
        <end position="409"/>
    </location>
</feature>
<feature type="repeat" description="EAR 3" evidence="3">
    <location>
        <begin position="413"/>
        <end position="461"/>
    </location>
</feature>
<feature type="repeat" description="EAR 4" evidence="3">
    <location>
        <begin position="465"/>
        <end position="513"/>
    </location>
</feature>
<feature type="repeat" description="EAR 5" evidence="3">
    <location>
        <begin position="515"/>
        <end position="571"/>
    </location>
</feature>
<feature type="repeat" description="EAR 6" evidence="3">
    <location>
        <begin position="575"/>
        <end position="623"/>
    </location>
</feature>
<feature type="repeat" description="EAR 7" evidence="3">
    <location>
        <begin position="626"/>
        <end position="669"/>
    </location>
</feature>
<feature type="glycosylation site" description="N-linked (GlcNAc...) asparagine" evidence="2">
    <location>
        <position position="498"/>
    </location>
</feature>
<feature type="splice variant" id="VSP_044542" description="In isoform 3." evidence="8">
    <location>
        <begin position="1"/>
        <end position="153"/>
    </location>
</feature>
<feature type="splice variant" id="VSP_044543" description="In isoform 2." evidence="7">
    <original>SALDWEFFSVGE</original>
    <variation>RYQPGGCKGRVS</variation>
    <location>
        <begin position="586"/>
        <end position="597"/>
    </location>
</feature>
<feature type="splice variant" id="VSP_044544" description="In isoform 2." evidence="7">
    <location>
        <begin position="598"/>
        <end position="670"/>
    </location>
</feature>
<feature type="sequence conflict" description="In Ref. 4; CAD31788." evidence="9" ref="4">
    <location>
        <position position="384"/>
    </location>
</feature>
<keyword id="KW-0025">Alternative splicing</keyword>
<keyword id="KW-0966">Cell projection</keyword>
<keyword id="KW-0325">Glycoprotein</keyword>
<keyword id="KW-1009">Hearing</keyword>
<keyword id="KW-1185">Reference proteome</keyword>
<keyword id="KW-0677">Repeat</keyword>
<keyword id="KW-0964">Secreted</keyword>
<keyword id="KW-0732">Signal</keyword>
<sequence length="670" mass="75098">MSALLMLCAVLLLLGTPSRGARPWEPCTDLRPLDILAEVVPLNGATSGIRMVQVEGVRGLQFSATEPRTTSFPASRIFSSCDFFPEEFSIIVTLRVPNLPPKKNEYLLSLLAEERDTLLLGLRYSPTQLHFLFLSEDLAGAWQTRVSFWSPGLMDSRWHTLILAVSQGSFSLTTDCGLPVDIMADVSFPPTLSVRGARFFIGSRKRTKGLFTGVIRQLVLLPGSDATPQLCPSRNARLAELSIPQVLKRLTGKPDDNEVLNYPYEADMKVTLGSRPPCTKAEGAQFWFDAAQKGLYLCAGSEWVSVLAAKTKLDYVEEHQSLHTNSETLGIEVFSIPGVGLFAAAANRKARSAIYKWTDGKFVSYQNIATHQAQSWRHFTIGKKIFLAVANFGPNERGQEFSVIYKWSPRKLKFTLYQRIATHSARDWEAFEVDGEHFLVVANHREGDNHNIDSMVYRWNPSSQLFEANQSIATSGAYDWEFFTVGPYSFLVVANTFNGTSTQVHSHLYIWLVGAFQLFQSFLTFGAADWEVFHIGERIFLAVANSHSYDVQMQAQNDSYVLSSVIYELNITAQTFVKFQDIPTCSALDWEFFSVGEDHFLVVANSFDGNTFSVNSIIYRWQGYEGFVAVHKLPTFGCRDWEAFNTTAGSYLIYSSAKEPLSRVLKLRTG</sequence>
<proteinExistence type="evidence at protein level"/>